<gene>
    <name evidence="1" type="primary">moaC</name>
    <name type="ordered locus">Avin_11260</name>
</gene>
<dbReference type="EC" id="4.6.1.17" evidence="1"/>
<dbReference type="EMBL" id="CP001157">
    <property type="protein sequence ID" value="ACO77355.1"/>
    <property type="molecule type" value="Genomic_DNA"/>
</dbReference>
<dbReference type="RefSeq" id="WP_012699776.1">
    <property type="nucleotide sequence ID" value="NC_012560.1"/>
</dbReference>
<dbReference type="SMR" id="C1DPC3"/>
<dbReference type="STRING" id="322710.Avin_11260"/>
<dbReference type="EnsemblBacteria" id="ACO77355">
    <property type="protein sequence ID" value="ACO77355"/>
    <property type="gene ID" value="Avin_11260"/>
</dbReference>
<dbReference type="GeneID" id="88184460"/>
<dbReference type="KEGG" id="avn:Avin_11260"/>
<dbReference type="eggNOG" id="COG0315">
    <property type="taxonomic scope" value="Bacteria"/>
</dbReference>
<dbReference type="HOGENOM" id="CLU_074693_1_1_6"/>
<dbReference type="OrthoDB" id="9794429at2"/>
<dbReference type="UniPathway" id="UPA00344"/>
<dbReference type="Proteomes" id="UP000002424">
    <property type="component" value="Chromosome"/>
</dbReference>
<dbReference type="GO" id="GO:0061799">
    <property type="term" value="F:cyclic pyranopterin monophosphate synthase activity"/>
    <property type="evidence" value="ECO:0007669"/>
    <property type="project" value="UniProtKB-UniRule"/>
</dbReference>
<dbReference type="GO" id="GO:0006777">
    <property type="term" value="P:Mo-molybdopterin cofactor biosynthetic process"/>
    <property type="evidence" value="ECO:0007669"/>
    <property type="project" value="UniProtKB-UniRule"/>
</dbReference>
<dbReference type="CDD" id="cd01420">
    <property type="entry name" value="MoaC_PE"/>
    <property type="match status" value="1"/>
</dbReference>
<dbReference type="FunFam" id="3.30.70.640:FF:000001">
    <property type="entry name" value="Cyclic pyranopterin monophosphate synthase"/>
    <property type="match status" value="1"/>
</dbReference>
<dbReference type="Gene3D" id="3.30.70.640">
    <property type="entry name" value="Molybdopterin cofactor biosynthesis C (MoaC) domain"/>
    <property type="match status" value="1"/>
</dbReference>
<dbReference type="HAMAP" id="MF_01224_B">
    <property type="entry name" value="MoaC_B"/>
    <property type="match status" value="1"/>
</dbReference>
<dbReference type="InterPro" id="IPR023045">
    <property type="entry name" value="MoaC"/>
</dbReference>
<dbReference type="InterPro" id="IPR047594">
    <property type="entry name" value="MoaC_bact/euk"/>
</dbReference>
<dbReference type="InterPro" id="IPR036522">
    <property type="entry name" value="MoaC_sf"/>
</dbReference>
<dbReference type="InterPro" id="IPR050105">
    <property type="entry name" value="MoCo_biosynth_MoaA/MoaC"/>
</dbReference>
<dbReference type="InterPro" id="IPR002820">
    <property type="entry name" value="Mopterin_CF_biosynth-C_dom"/>
</dbReference>
<dbReference type="NCBIfam" id="TIGR00581">
    <property type="entry name" value="moaC"/>
    <property type="match status" value="1"/>
</dbReference>
<dbReference type="NCBIfam" id="NF006870">
    <property type="entry name" value="PRK09364.1"/>
    <property type="match status" value="1"/>
</dbReference>
<dbReference type="PANTHER" id="PTHR22960:SF29">
    <property type="entry name" value="CYCLIC PYRANOPTERIN MONOPHOSPHATE SYNTHASE"/>
    <property type="match status" value="1"/>
</dbReference>
<dbReference type="PANTHER" id="PTHR22960">
    <property type="entry name" value="MOLYBDOPTERIN COFACTOR SYNTHESIS PROTEIN A"/>
    <property type="match status" value="1"/>
</dbReference>
<dbReference type="Pfam" id="PF01967">
    <property type="entry name" value="MoaC"/>
    <property type="match status" value="1"/>
</dbReference>
<dbReference type="SUPFAM" id="SSF55040">
    <property type="entry name" value="Molybdenum cofactor biosynthesis protein C, MoaC"/>
    <property type="match status" value="1"/>
</dbReference>
<keyword id="KW-0456">Lyase</keyword>
<keyword id="KW-0501">Molybdenum cofactor biosynthesis</keyword>
<comment type="function">
    <text evidence="1">Catalyzes the conversion of (8S)-3',8-cyclo-7,8-dihydroguanosine 5'-triphosphate to cyclic pyranopterin monophosphate (cPMP).</text>
</comment>
<comment type="catalytic activity">
    <reaction evidence="1">
        <text>(8S)-3',8-cyclo-7,8-dihydroguanosine 5'-triphosphate = cyclic pyranopterin phosphate + diphosphate</text>
        <dbReference type="Rhea" id="RHEA:49580"/>
        <dbReference type="ChEBI" id="CHEBI:33019"/>
        <dbReference type="ChEBI" id="CHEBI:59648"/>
        <dbReference type="ChEBI" id="CHEBI:131766"/>
        <dbReference type="EC" id="4.6.1.17"/>
    </reaction>
</comment>
<comment type="pathway">
    <text evidence="1">Cofactor biosynthesis; molybdopterin biosynthesis.</text>
</comment>
<comment type="subunit">
    <text evidence="1">Homohexamer; trimer of dimers.</text>
</comment>
<comment type="similarity">
    <text evidence="1">Belongs to the MoaC family.</text>
</comment>
<protein>
    <recommendedName>
        <fullName evidence="1">Cyclic pyranopterin monophosphate synthase</fullName>
        <ecNumber evidence="1">4.6.1.17</ecNumber>
    </recommendedName>
    <alternativeName>
        <fullName evidence="1">Molybdenum cofactor biosynthesis protein C</fullName>
    </alternativeName>
</protein>
<evidence type="ECO:0000255" key="1">
    <source>
        <dbReference type="HAMAP-Rule" id="MF_01224"/>
    </source>
</evidence>
<reference key="1">
    <citation type="journal article" date="2009" name="J. Bacteriol.">
        <title>Genome sequence of Azotobacter vinelandii, an obligate aerobe specialized to support diverse anaerobic metabolic processes.</title>
        <authorList>
            <person name="Setubal J.C."/>
            <person name="Dos Santos P."/>
            <person name="Goldman B.S."/>
            <person name="Ertesvaag H."/>
            <person name="Espin G."/>
            <person name="Rubio L.M."/>
            <person name="Valla S."/>
            <person name="Almeida N.F."/>
            <person name="Balasubramanian D."/>
            <person name="Cromes L."/>
            <person name="Curatti L."/>
            <person name="Du Z."/>
            <person name="Godsy E."/>
            <person name="Goodner B."/>
            <person name="Hellner-Burris K."/>
            <person name="Hernandez J.A."/>
            <person name="Houmiel K."/>
            <person name="Imperial J."/>
            <person name="Kennedy C."/>
            <person name="Larson T.J."/>
            <person name="Latreille P."/>
            <person name="Ligon L.S."/>
            <person name="Lu J."/>
            <person name="Maerk M."/>
            <person name="Miller N.M."/>
            <person name="Norton S."/>
            <person name="O'Carroll I.P."/>
            <person name="Paulsen I."/>
            <person name="Raulfs E.C."/>
            <person name="Roemer R."/>
            <person name="Rosser J."/>
            <person name="Segura D."/>
            <person name="Slater S."/>
            <person name="Stricklin S.L."/>
            <person name="Studholme D.J."/>
            <person name="Sun J."/>
            <person name="Viana C.J."/>
            <person name="Wallin E."/>
            <person name="Wang B."/>
            <person name="Wheeler C."/>
            <person name="Zhu H."/>
            <person name="Dean D.R."/>
            <person name="Dixon R."/>
            <person name="Wood D."/>
        </authorList>
    </citation>
    <scope>NUCLEOTIDE SEQUENCE [LARGE SCALE GENOMIC DNA]</scope>
    <source>
        <strain>DJ / ATCC BAA-1303</strain>
    </source>
</reference>
<feature type="chain" id="PRO_1000213980" description="Cyclic pyranopterin monophosphate synthase">
    <location>
        <begin position="1"/>
        <end position="158"/>
    </location>
</feature>
<feature type="active site" evidence="1">
    <location>
        <position position="125"/>
    </location>
</feature>
<feature type="binding site" evidence="1">
    <location>
        <begin position="73"/>
        <end position="75"/>
    </location>
    <ligand>
        <name>substrate</name>
    </ligand>
</feature>
<feature type="binding site" evidence="1">
    <location>
        <begin position="110"/>
        <end position="111"/>
    </location>
    <ligand>
        <name>substrate</name>
    </ligand>
</feature>
<accession>C1DPC3</accession>
<sequence>MLTHLDSRGHAHMVDVTDKASTAREAEAEAWVRMRPETLELIQKGGHPKGDVFAVARIAGIMAAKKTHELIPLCHPLLLTGIKVELSAEGEDRVRIVARCKLAGQTGVEMEALTAASVAALTLYDMCKAVDRGLLIEQVRLLEKKGGKSGHYQAGQAM</sequence>
<name>MOAC_AZOVD</name>
<organism>
    <name type="scientific">Azotobacter vinelandii (strain DJ / ATCC BAA-1303)</name>
    <dbReference type="NCBI Taxonomy" id="322710"/>
    <lineage>
        <taxon>Bacteria</taxon>
        <taxon>Pseudomonadati</taxon>
        <taxon>Pseudomonadota</taxon>
        <taxon>Gammaproteobacteria</taxon>
        <taxon>Pseudomonadales</taxon>
        <taxon>Pseudomonadaceae</taxon>
        <taxon>Azotobacter</taxon>
    </lineage>
</organism>
<proteinExistence type="inferred from homology"/>